<sequence>MLAGVLLLQIWLKCKYANVQFGEHGFNGDEFYLDFYINENFSTKQFAKIESDLNSLSSKLEGISQKFVSLDEALSFFENDQFTKNLLKKSNLNKFKITFFENKHFWIEDLTLTFIKKSFIKLLNVSVNYFLGDPSQLQLQRINGIFAQSKKELEQLIKENEERLKKDHRSLGKQLELFSFDPLIGAGLPIWLAKGTTLRNIIGNFVHHQQLLFGFNTVCSPVLANIELFKISGHYQHYKEDMFPAIKLDSQAMMLRPMTCPHHCLIFKQKRYSYKKMPQRFSEDSILHRFEASGGLIGLERVRCMTLLDNHIFCRADQIKSEIKNAFNLIQKVNKKFGFIFDRIDLSLHDPKNQSKFIDNPGLWRESESQMENVLKDLNIQYQKEIGAAAFYGPKIDFQFKTIFKKMITIATIQLDFLLPEKFDLTYIDKKNTLKKPVIIHVGIIGTYERFIAALLEKTSGNFPLWLAPVQAVIIPVNIQKHLKAAKKLYNKLLKENIRVNLDDNQDRLAKKVRQAIIEKIPLQLIVGDKEIENLEKLTCRGFKGEKITRISFNNFVKRVRRDG</sequence>
<dbReference type="EC" id="6.1.1.3" evidence="1"/>
<dbReference type="EMBL" id="L43967">
    <property type="protein sequence ID" value="AAC71602.1"/>
    <property type="molecule type" value="Genomic_DNA"/>
</dbReference>
<dbReference type="EMBL" id="U02130">
    <property type="protein sequence ID" value="AAD12408.1"/>
    <property type="molecule type" value="Genomic_DNA"/>
</dbReference>
<dbReference type="PIR" id="E64241">
    <property type="entry name" value="E64241"/>
</dbReference>
<dbReference type="RefSeq" id="WP_010869457.1">
    <property type="nucleotide sequence ID" value="NC_000908.2"/>
</dbReference>
<dbReference type="SMR" id="P47615"/>
<dbReference type="FunCoup" id="P47615">
    <property type="interactions" value="208"/>
</dbReference>
<dbReference type="STRING" id="243273.MG_375"/>
<dbReference type="GeneID" id="88282558"/>
<dbReference type="KEGG" id="mge:MG_375"/>
<dbReference type="eggNOG" id="COG0441">
    <property type="taxonomic scope" value="Bacteria"/>
</dbReference>
<dbReference type="HOGENOM" id="CLU_008554_3_2_14"/>
<dbReference type="InParanoid" id="P47615"/>
<dbReference type="OrthoDB" id="9802304at2"/>
<dbReference type="BioCyc" id="MGEN243273:G1GJ2-469-MONOMER"/>
<dbReference type="Proteomes" id="UP000000807">
    <property type="component" value="Chromosome"/>
</dbReference>
<dbReference type="GO" id="GO:0005737">
    <property type="term" value="C:cytoplasm"/>
    <property type="evidence" value="ECO:0007669"/>
    <property type="project" value="UniProtKB-SubCell"/>
</dbReference>
<dbReference type="GO" id="GO:0005524">
    <property type="term" value="F:ATP binding"/>
    <property type="evidence" value="ECO:0007669"/>
    <property type="project" value="UniProtKB-UniRule"/>
</dbReference>
<dbReference type="GO" id="GO:0046872">
    <property type="term" value="F:metal ion binding"/>
    <property type="evidence" value="ECO:0007669"/>
    <property type="project" value="UniProtKB-KW"/>
</dbReference>
<dbReference type="GO" id="GO:0004829">
    <property type="term" value="F:threonine-tRNA ligase activity"/>
    <property type="evidence" value="ECO:0000318"/>
    <property type="project" value="GO_Central"/>
</dbReference>
<dbReference type="GO" id="GO:0000049">
    <property type="term" value="F:tRNA binding"/>
    <property type="evidence" value="ECO:0007669"/>
    <property type="project" value="UniProtKB-KW"/>
</dbReference>
<dbReference type="GO" id="GO:0006435">
    <property type="term" value="P:threonyl-tRNA aminoacylation"/>
    <property type="evidence" value="ECO:0000318"/>
    <property type="project" value="GO_Central"/>
</dbReference>
<dbReference type="CDD" id="cd00860">
    <property type="entry name" value="ThrRS_anticodon"/>
    <property type="match status" value="1"/>
</dbReference>
<dbReference type="CDD" id="cd00771">
    <property type="entry name" value="ThrRS_core"/>
    <property type="match status" value="1"/>
</dbReference>
<dbReference type="FunFam" id="3.30.930.10:FF:000002">
    <property type="entry name" value="Threonine--tRNA ligase"/>
    <property type="match status" value="1"/>
</dbReference>
<dbReference type="FunFam" id="3.40.50.800:FF:000001">
    <property type="entry name" value="Threonine--tRNA ligase"/>
    <property type="match status" value="1"/>
</dbReference>
<dbReference type="Gene3D" id="3.30.54.20">
    <property type="match status" value="1"/>
</dbReference>
<dbReference type="Gene3D" id="3.40.50.800">
    <property type="entry name" value="Anticodon-binding domain"/>
    <property type="match status" value="1"/>
</dbReference>
<dbReference type="Gene3D" id="3.30.930.10">
    <property type="entry name" value="Bira Bifunctional Protein, Domain 2"/>
    <property type="match status" value="1"/>
</dbReference>
<dbReference type="Gene3D" id="3.30.980.10">
    <property type="entry name" value="Threonyl-trna Synthetase, Chain A, domain 2"/>
    <property type="match status" value="1"/>
</dbReference>
<dbReference type="HAMAP" id="MF_00184">
    <property type="entry name" value="Thr_tRNA_synth"/>
    <property type="match status" value="1"/>
</dbReference>
<dbReference type="InterPro" id="IPR002314">
    <property type="entry name" value="aa-tRNA-synt_IIb"/>
</dbReference>
<dbReference type="InterPro" id="IPR006195">
    <property type="entry name" value="aa-tRNA-synth_II"/>
</dbReference>
<dbReference type="InterPro" id="IPR045864">
    <property type="entry name" value="aa-tRNA-synth_II/BPL/LPL"/>
</dbReference>
<dbReference type="InterPro" id="IPR004154">
    <property type="entry name" value="Anticodon-bd"/>
</dbReference>
<dbReference type="InterPro" id="IPR036621">
    <property type="entry name" value="Anticodon-bd_dom_sf"/>
</dbReference>
<dbReference type="InterPro" id="IPR002320">
    <property type="entry name" value="Thr-tRNA-ligase_IIa"/>
</dbReference>
<dbReference type="InterPro" id="IPR018163">
    <property type="entry name" value="Thr/Ala-tRNA-synth_IIc_edit"/>
</dbReference>
<dbReference type="InterPro" id="IPR047246">
    <property type="entry name" value="ThrRS_anticodon"/>
</dbReference>
<dbReference type="InterPro" id="IPR033728">
    <property type="entry name" value="ThrRS_core"/>
</dbReference>
<dbReference type="NCBIfam" id="TIGR00418">
    <property type="entry name" value="thrS"/>
    <property type="match status" value="1"/>
</dbReference>
<dbReference type="PANTHER" id="PTHR11451:SF56">
    <property type="entry name" value="THREONINE--TRNA LIGASE 1"/>
    <property type="match status" value="1"/>
</dbReference>
<dbReference type="PANTHER" id="PTHR11451">
    <property type="entry name" value="THREONINE-TRNA LIGASE"/>
    <property type="match status" value="1"/>
</dbReference>
<dbReference type="Pfam" id="PF03129">
    <property type="entry name" value="HGTP_anticodon"/>
    <property type="match status" value="1"/>
</dbReference>
<dbReference type="Pfam" id="PF00587">
    <property type="entry name" value="tRNA-synt_2b"/>
    <property type="match status" value="1"/>
</dbReference>
<dbReference type="PRINTS" id="PR01047">
    <property type="entry name" value="TRNASYNTHTHR"/>
</dbReference>
<dbReference type="SUPFAM" id="SSF52954">
    <property type="entry name" value="Class II aaRS ABD-related"/>
    <property type="match status" value="1"/>
</dbReference>
<dbReference type="SUPFAM" id="SSF55681">
    <property type="entry name" value="Class II aaRS and biotin synthetases"/>
    <property type="match status" value="1"/>
</dbReference>
<dbReference type="SUPFAM" id="SSF55186">
    <property type="entry name" value="ThrRS/AlaRS common domain"/>
    <property type="match status" value="1"/>
</dbReference>
<dbReference type="PROSITE" id="PS50862">
    <property type="entry name" value="AA_TRNA_LIGASE_II"/>
    <property type="match status" value="1"/>
</dbReference>
<keyword id="KW-0030">Aminoacyl-tRNA synthetase</keyword>
<keyword id="KW-0067">ATP-binding</keyword>
<keyword id="KW-0963">Cytoplasm</keyword>
<keyword id="KW-0436">Ligase</keyword>
<keyword id="KW-0479">Metal-binding</keyword>
<keyword id="KW-0547">Nucleotide-binding</keyword>
<keyword id="KW-0648">Protein biosynthesis</keyword>
<keyword id="KW-1185">Reference proteome</keyword>
<keyword id="KW-0694">RNA-binding</keyword>
<keyword id="KW-0820">tRNA-binding</keyword>
<keyword id="KW-0862">Zinc</keyword>
<reference key="1">
    <citation type="journal article" date="1995" name="Science">
        <title>The minimal gene complement of Mycoplasma genitalium.</title>
        <authorList>
            <person name="Fraser C.M."/>
            <person name="Gocayne J.D."/>
            <person name="White O."/>
            <person name="Adams M.D."/>
            <person name="Clayton R.A."/>
            <person name="Fleischmann R.D."/>
            <person name="Bult C.J."/>
            <person name="Kerlavage A.R."/>
            <person name="Sutton G.G."/>
            <person name="Kelley J.M."/>
            <person name="Fritchman J.L."/>
            <person name="Weidman J.F."/>
            <person name="Small K.V."/>
            <person name="Sandusky M."/>
            <person name="Fuhrmann J.L."/>
            <person name="Nguyen D.T."/>
            <person name="Utterback T.R."/>
            <person name="Saudek D.M."/>
            <person name="Phillips C.A."/>
            <person name="Merrick J.M."/>
            <person name="Tomb J.-F."/>
            <person name="Dougherty B.A."/>
            <person name="Bott K.F."/>
            <person name="Hu P.-C."/>
            <person name="Lucier T.S."/>
            <person name="Peterson S.N."/>
            <person name="Smith H.O."/>
            <person name="Hutchison C.A. III"/>
            <person name="Venter J.C."/>
        </authorList>
    </citation>
    <scope>NUCLEOTIDE SEQUENCE [LARGE SCALE GENOMIC DNA]</scope>
    <source>
        <strain>ATCC 33530 / DSM 19775 / NCTC 10195 / G37</strain>
    </source>
</reference>
<reference key="2">
    <citation type="journal article" date="1993" name="J. Bacteriol.">
        <title>A survey of the Mycoplasma genitalium genome by using random sequencing.</title>
        <authorList>
            <person name="Peterson S.N."/>
            <person name="Hu P.-C."/>
            <person name="Bott K.F."/>
            <person name="Hutchison C.A. III"/>
        </authorList>
    </citation>
    <scope>NUCLEOTIDE SEQUENCE [GENOMIC DNA] OF 350-463</scope>
    <source>
        <strain>ATCC 33530 / DSM 19775 / NCTC 10195 / G37</strain>
    </source>
</reference>
<accession>P47615</accession>
<gene>
    <name evidence="1" type="primary">thrS</name>
    <name type="ordered locus">MG375</name>
</gene>
<feature type="chain" id="PRO_0000101007" description="Threonine--tRNA ligase">
    <location>
        <begin position="1"/>
        <end position="564"/>
    </location>
</feature>
<feature type="region of interest" description="Catalytic" evidence="1">
    <location>
        <begin position="167"/>
        <end position="464"/>
    </location>
</feature>
<feature type="binding site" evidence="1">
    <location>
        <position position="260"/>
    </location>
    <ligand>
        <name>Zn(2+)</name>
        <dbReference type="ChEBI" id="CHEBI:29105"/>
    </ligand>
</feature>
<feature type="binding site" evidence="1">
    <location>
        <position position="311"/>
    </location>
    <ligand>
        <name>Zn(2+)</name>
        <dbReference type="ChEBI" id="CHEBI:29105"/>
    </ligand>
</feature>
<feature type="binding site" evidence="1">
    <location>
        <position position="441"/>
    </location>
    <ligand>
        <name>Zn(2+)</name>
        <dbReference type="ChEBI" id="CHEBI:29105"/>
    </ligand>
</feature>
<comment type="function">
    <text evidence="1">Catalyzes the attachment of threonine to tRNA(Thr) in a two-step reaction: L-threonine is first activated by ATP to form Thr-AMP and then transferred to the acceptor end of tRNA(Thr). Also edits incorrectly charged L-seryl-tRNA(Thr).</text>
</comment>
<comment type="catalytic activity">
    <reaction evidence="1">
        <text>tRNA(Thr) + L-threonine + ATP = L-threonyl-tRNA(Thr) + AMP + diphosphate + H(+)</text>
        <dbReference type="Rhea" id="RHEA:24624"/>
        <dbReference type="Rhea" id="RHEA-COMP:9670"/>
        <dbReference type="Rhea" id="RHEA-COMP:9704"/>
        <dbReference type="ChEBI" id="CHEBI:15378"/>
        <dbReference type="ChEBI" id="CHEBI:30616"/>
        <dbReference type="ChEBI" id="CHEBI:33019"/>
        <dbReference type="ChEBI" id="CHEBI:57926"/>
        <dbReference type="ChEBI" id="CHEBI:78442"/>
        <dbReference type="ChEBI" id="CHEBI:78534"/>
        <dbReference type="ChEBI" id="CHEBI:456215"/>
        <dbReference type="EC" id="6.1.1.3"/>
    </reaction>
</comment>
<comment type="cofactor">
    <cofactor evidence="1">
        <name>Zn(2+)</name>
        <dbReference type="ChEBI" id="CHEBI:29105"/>
    </cofactor>
    <text evidence="1">Binds 1 zinc ion per subunit.</text>
</comment>
<comment type="subunit">
    <text evidence="1">Homodimer.</text>
</comment>
<comment type="subcellular location">
    <subcellularLocation>
        <location evidence="1">Cytoplasm</location>
    </subcellularLocation>
</comment>
<comment type="similarity">
    <text evidence="1">Belongs to the class-II aminoacyl-tRNA synthetase family.</text>
</comment>
<protein>
    <recommendedName>
        <fullName evidence="1">Threonine--tRNA ligase</fullName>
        <ecNumber evidence="1">6.1.1.3</ecNumber>
    </recommendedName>
    <alternativeName>
        <fullName evidence="1">Threonyl-tRNA synthetase</fullName>
        <shortName evidence="1">ThrRS</shortName>
    </alternativeName>
</protein>
<name>SYT_MYCGE</name>
<organism>
    <name type="scientific">Mycoplasma genitalium (strain ATCC 33530 / DSM 19775 / NCTC 10195 / G37)</name>
    <name type="common">Mycoplasmoides genitalium</name>
    <dbReference type="NCBI Taxonomy" id="243273"/>
    <lineage>
        <taxon>Bacteria</taxon>
        <taxon>Bacillati</taxon>
        <taxon>Mycoplasmatota</taxon>
        <taxon>Mycoplasmoidales</taxon>
        <taxon>Mycoplasmoidaceae</taxon>
        <taxon>Mycoplasmoides</taxon>
    </lineage>
</organism>
<evidence type="ECO:0000255" key="1">
    <source>
        <dbReference type="HAMAP-Rule" id="MF_00184"/>
    </source>
</evidence>
<proteinExistence type="inferred from homology"/>